<accession>A9RAG3</accession>
<sequence>MNFMELLLFVLSMLLAVAFLTVAERKTLGYMQRRVGPNAVGYYGVLMAMADAAKLLLKEMILPTHADKFMLIMSPMMTLMSALLCWAMIPFGPGITIMDSNYGFMLALAMGSVGVFGSLFAGWAGNSKYSTIGSMRSTAQLISYELVLTTVILICMLLTGTMNTSRYVELQESMWLVVPLLPLSLMWFMGCVAECARPPFDNVEAESELVSGHMTEYSSSMFVLFFLSEYASMLFYSTLTAILFFGGGTGLILGLKANFFAFTYIWVRAATPRVRYDKLIAMCWIVFLPLLFALALFMPSLIYIMDGYTFME</sequence>
<organism>
    <name type="scientific">Debaryomyces hansenii (strain ATCC 36239 / CBS 767 / BCRC 21394 / JCM 1990 / NBRC 0083 / IGC 2968)</name>
    <name type="common">Yeast</name>
    <name type="synonym">Torulaspora hansenii</name>
    <dbReference type="NCBI Taxonomy" id="284592"/>
    <lineage>
        <taxon>Eukaryota</taxon>
        <taxon>Fungi</taxon>
        <taxon>Dikarya</taxon>
        <taxon>Ascomycota</taxon>
        <taxon>Saccharomycotina</taxon>
        <taxon>Pichiomycetes</taxon>
        <taxon>Debaryomycetaceae</taxon>
        <taxon>Debaryomyces</taxon>
    </lineage>
</organism>
<protein>
    <recommendedName>
        <fullName>NADH-ubiquinone oxidoreductase chain 1</fullName>
        <ecNumber>7.1.1.2</ecNumber>
    </recommendedName>
    <alternativeName>
        <fullName>NADH dehydrogenase subunit 1</fullName>
    </alternativeName>
</protein>
<feature type="chain" id="PRO_0000355050" description="NADH-ubiquinone oxidoreductase chain 1">
    <location>
        <begin position="1"/>
        <end position="312"/>
    </location>
</feature>
<feature type="transmembrane region" description="Helical" evidence="2">
    <location>
        <begin position="3"/>
        <end position="23"/>
    </location>
</feature>
<feature type="transmembrane region" description="Helical" evidence="2">
    <location>
        <begin position="37"/>
        <end position="57"/>
    </location>
</feature>
<feature type="transmembrane region" description="Helical" evidence="2">
    <location>
        <begin position="69"/>
        <end position="89"/>
    </location>
</feature>
<feature type="transmembrane region" description="Helical" evidence="2">
    <location>
        <begin position="104"/>
        <end position="124"/>
    </location>
</feature>
<feature type="transmembrane region" description="Helical" evidence="2">
    <location>
        <begin position="141"/>
        <end position="161"/>
    </location>
</feature>
<feature type="transmembrane region" description="Helical" evidence="2">
    <location>
        <begin position="173"/>
        <end position="193"/>
    </location>
</feature>
<feature type="transmembrane region" description="Helical" evidence="2">
    <location>
        <begin position="233"/>
        <end position="253"/>
    </location>
</feature>
<feature type="transmembrane region" description="Helical" evidence="2">
    <location>
        <begin position="279"/>
        <end position="299"/>
    </location>
</feature>
<proteinExistence type="inferred from homology"/>
<comment type="function">
    <text evidence="1">Core subunit of the mitochondrial membrane respiratory chain NADH dehydrogenase (Complex I) that is believed to belong to the minimal assembly required for catalysis. Complex I functions in the transfer of electrons from NADH to the respiratory chain. The immediate electron acceptor for the enzyme is believed to be ubiquinone (By similarity).</text>
</comment>
<comment type="catalytic activity">
    <reaction>
        <text>a ubiquinone + NADH + 5 H(+)(in) = a ubiquinol + NAD(+) + 4 H(+)(out)</text>
        <dbReference type="Rhea" id="RHEA:29091"/>
        <dbReference type="Rhea" id="RHEA-COMP:9565"/>
        <dbReference type="Rhea" id="RHEA-COMP:9566"/>
        <dbReference type="ChEBI" id="CHEBI:15378"/>
        <dbReference type="ChEBI" id="CHEBI:16389"/>
        <dbReference type="ChEBI" id="CHEBI:17976"/>
        <dbReference type="ChEBI" id="CHEBI:57540"/>
        <dbReference type="ChEBI" id="CHEBI:57945"/>
        <dbReference type="EC" id="7.1.1.2"/>
    </reaction>
</comment>
<comment type="subcellular location">
    <subcellularLocation>
        <location evidence="1">Mitochondrion inner membrane</location>
        <topology evidence="1">Multi-pass membrane protein</topology>
    </subcellularLocation>
</comment>
<comment type="similarity">
    <text evidence="3">Belongs to the complex I subunit 1 family.</text>
</comment>
<name>NU1M_DEBHA</name>
<keyword id="KW-0249">Electron transport</keyword>
<keyword id="KW-0472">Membrane</keyword>
<keyword id="KW-0496">Mitochondrion</keyword>
<keyword id="KW-0999">Mitochondrion inner membrane</keyword>
<keyword id="KW-0520">NAD</keyword>
<keyword id="KW-1185">Reference proteome</keyword>
<keyword id="KW-0679">Respiratory chain</keyword>
<keyword id="KW-1278">Translocase</keyword>
<keyword id="KW-0812">Transmembrane</keyword>
<keyword id="KW-1133">Transmembrane helix</keyword>
<keyword id="KW-0813">Transport</keyword>
<keyword id="KW-0830">Ubiquinone</keyword>
<dbReference type="EC" id="7.1.1.2"/>
<dbReference type="EMBL" id="DQ508940">
    <property type="protein sequence ID" value="ABF58064.1"/>
    <property type="molecule type" value="Genomic_DNA"/>
</dbReference>
<dbReference type="RefSeq" id="YP_001621415.1">
    <property type="nucleotide sequence ID" value="NC_010166.1"/>
</dbReference>
<dbReference type="SMR" id="A9RAG3"/>
<dbReference type="STRING" id="284592.A9RAG3"/>
<dbReference type="GeneID" id="5845857"/>
<dbReference type="KEGG" id="dha:ND1"/>
<dbReference type="InParanoid" id="A9RAG3"/>
<dbReference type="Proteomes" id="UP000000599">
    <property type="component" value="Mitochondrion"/>
</dbReference>
<dbReference type="GO" id="GO:0005743">
    <property type="term" value="C:mitochondrial inner membrane"/>
    <property type="evidence" value="ECO:0007669"/>
    <property type="project" value="UniProtKB-SubCell"/>
</dbReference>
<dbReference type="GO" id="GO:0008137">
    <property type="term" value="F:NADH dehydrogenase (ubiquinone) activity"/>
    <property type="evidence" value="ECO:0007669"/>
    <property type="project" value="UniProtKB-EC"/>
</dbReference>
<dbReference type="GO" id="GO:0009060">
    <property type="term" value="P:aerobic respiration"/>
    <property type="evidence" value="ECO:0007669"/>
    <property type="project" value="TreeGrafter"/>
</dbReference>
<dbReference type="HAMAP" id="MF_01350">
    <property type="entry name" value="NDH1_NuoH"/>
    <property type="match status" value="1"/>
</dbReference>
<dbReference type="InterPro" id="IPR001694">
    <property type="entry name" value="NADH_UbQ_OxRdtase_su1/FPO"/>
</dbReference>
<dbReference type="InterPro" id="IPR018086">
    <property type="entry name" value="NADH_UbQ_OxRdtase_su1_CS"/>
</dbReference>
<dbReference type="PANTHER" id="PTHR11432">
    <property type="entry name" value="NADH DEHYDROGENASE SUBUNIT 1"/>
    <property type="match status" value="1"/>
</dbReference>
<dbReference type="PANTHER" id="PTHR11432:SF3">
    <property type="entry name" value="NADH-UBIQUINONE OXIDOREDUCTASE CHAIN 1"/>
    <property type="match status" value="1"/>
</dbReference>
<dbReference type="Pfam" id="PF00146">
    <property type="entry name" value="NADHdh"/>
    <property type="match status" value="1"/>
</dbReference>
<dbReference type="PROSITE" id="PS00667">
    <property type="entry name" value="COMPLEX1_ND1_1"/>
    <property type="match status" value="1"/>
</dbReference>
<dbReference type="PROSITE" id="PS00668">
    <property type="entry name" value="COMPLEX1_ND1_2"/>
    <property type="match status" value="1"/>
</dbReference>
<evidence type="ECO:0000250" key="1"/>
<evidence type="ECO:0000255" key="2"/>
<evidence type="ECO:0000305" key="3"/>
<gene>
    <name type="primary">ND1</name>
</gene>
<reference key="1">
    <citation type="journal article" date="2008" name="FEMS Yeast Res.">
        <title>Promiscuous DNA in the nuclear genomes of hemiascomycetous yeasts.</title>
        <authorList>
            <person name="Sacerdot C."/>
            <person name="Casaregola S."/>
            <person name="Lafontaine I."/>
            <person name="Tekaia F."/>
            <person name="Dujon B."/>
            <person name="Ozier-Kalogeropoulos O."/>
        </authorList>
    </citation>
    <scope>NUCLEOTIDE SEQUENCE [LARGE SCALE GENOMIC DNA]</scope>
    <source>
        <strain>ATCC 36239 / CBS 767 / BCRC 21394 / JCM 1990 / NBRC 0083 / IGC 2968</strain>
    </source>
</reference>
<geneLocation type="mitochondrion"/>